<proteinExistence type="inferred from homology"/>
<comment type="catalytic activity">
    <reaction evidence="1">
        <text>beta-D-fructose 1,6-bisphosphate + H2O = beta-D-fructose 6-phosphate + phosphate</text>
        <dbReference type="Rhea" id="RHEA:11064"/>
        <dbReference type="ChEBI" id="CHEBI:15377"/>
        <dbReference type="ChEBI" id="CHEBI:32966"/>
        <dbReference type="ChEBI" id="CHEBI:43474"/>
        <dbReference type="ChEBI" id="CHEBI:57634"/>
        <dbReference type="EC" id="3.1.3.11"/>
    </reaction>
</comment>
<comment type="cofactor">
    <cofactor evidence="1">
        <name>Mg(2+)</name>
        <dbReference type="ChEBI" id="CHEBI:18420"/>
    </cofactor>
    <text evidence="1">Binds 2 magnesium ions per subunit.</text>
</comment>
<comment type="pathway">
    <text evidence="1">Carbohydrate biosynthesis; gluconeogenesis.</text>
</comment>
<comment type="subunit">
    <text evidence="1">Homotetramer.</text>
</comment>
<comment type="subcellular location">
    <subcellularLocation>
        <location evidence="1">Cytoplasm</location>
    </subcellularLocation>
</comment>
<comment type="similarity">
    <text evidence="1">Belongs to the FBPase class 1 family.</text>
</comment>
<dbReference type="EC" id="3.1.3.11" evidence="1"/>
<dbReference type="EMBL" id="CP000142">
    <property type="protein sequence ID" value="ABA88277.1"/>
    <property type="molecule type" value="Genomic_DNA"/>
</dbReference>
<dbReference type="RefSeq" id="WP_011340746.1">
    <property type="nucleotide sequence ID" value="NC_007498.2"/>
</dbReference>
<dbReference type="SMR" id="Q3A5T0"/>
<dbReference type="STRING" id="338963.Pcar_1027"/>
<dbReference type="KEGG" id="pca:Pcar_1027"/>
<dbReference type="eggNOG" id="COG0158">
    <property type="taxonomic scope" value="Bacteria"/>
</dbReference>
<dbReference type="HOGENOM" id="CLU_039977_2_2_7"/>
<dbReference type="OrthoDB" id="9806756at2"/>
<dbReference type="UniPathway" id="UPA00138"/>
<dbReference type="Proteomes" id="UP000002534">
    <property type="component" value="Chromosome"/>
</dbReference>
<dbReference type="GO" id="GO:0005829">
    <property type="term" value="C:cytosol"/>
    <property type="evidence" value="ECO:0007669"/>
    <property type="project" value="TreeGrafter"/>
</dbReference>
<dbReference type="GO" id="GO:0042132">
    <property type="term" value="F:fructose 1,6-bisphosphate 1-phosphatase activity"/>
    <property type="evidence" value="ECO:0007669"/>
    <property type="project" value="UniProtKB-UniRule"/>
</dbReference>
<dbReference type="GO" id="GO:0000287">
    <property type="term" value="F:magnesium ion binding"/>
    <property type="evidence" value="ECO:0007669"/>
    <property type="project" value="UniProtKB-UniRule"/>
</dbReference>
<dbReference type="GO" id="GO:0030388">
    <property type="term" value="P:fructose 1,6-bisphosphate metabolic process"/>
    <property type="evidence" value="ECO:0007669"/>
    <property type="project" value="TreeGrafter"/>
</dbReference>
<dbReference type="GO" id="GO:0006002">
    <property type="term" value="P:fructose 6-phosphate metabolic process"/>
    <property type="evidence" value="ECO:0007669"/>
    <property type="project" value="TreeGrafter"/>
</dbReference>
<dbReference type="GO" id="GO:0006000">
    <property type="term" value="P:fructose metabolic process"/>
    <property type="evidence" value="ECO:0007669"/>
    <property type="project" value="TreeGrafter"/>
</dbReference>
<dbReference type="GO" id="GO:0006094">
    <property type="term" value="P:gluconeogenesis"/>
    <property type="evidence" value="ECO:0007669"/>
    <property type="project" value="UniProtKB-UniRule"/>
</dbReference>
<dbReference type="GO" id="GO:0005986">
    <property type="term" value="P:sucrose biosynthetic process"/>
    <property type="evidence" value="ECO:0007669"/>
    <property type="project" value="TreeGrafter"/>
</dbReference>
<dbReference type="CDD" id="cd00354">
    <property type="entry name" value="FBPase"/>
    <property type="match status" value="1"/>
</dbReference>
<dbReference type="Gene3D" id="3.40.190.80">
    <property type="match status" value="1"/>
</dbReference>
<dbReference type="Gene3D" id="3.30.540.10">
    <property type="entry name" value="Fructose-1,6-Bisphosphatase, subunit A, domain 1"/>
    <property type="match status" value="1"/>
</dbReference>
<dbReference type="HAMAP" id="MF_01855">
    <property type="entry name" value="FBPase_class1"/>
    <property type="match status" value="1"/>
</dbReference>
<dbReference type="InterPro" id="IPR044015">
    <property type="entry name" value="FBPase_C_dom"/>
</dbReference>
<dbReference type="InterPro" id="IPR000146">
    <property type="entry name" value="FBPase_class-1"/>
</dbReference>
<dbReference type="InterPro" id="IPR033391">
    <property type="entry name" value="FBPase_N"/>
</dbReference>
<dbReference type="InterPro" id="IPR028343">
    <property type="entry name" value="FBPtase"/>
</dbReference>
<dbReference type="InterPro" id="IPR020548">
    <property type="entry name" value="Fructose_bisphosphatase_AS"/>
</dbReference>
<dbReference type="InterPro" id="IPR023079">
    <property type="entry name" value="SBPase"/>
</dbReference>
<dbReference type="NCBIfam" id="NF006783">
    <property type="entry name" value="PRK09293.2-4"/>
    <property type="match status" value="1"/>
</dbReference>
<dbReference type="PANTHER" id="PTHR11556">
    <property type="entry name" value="FRUCTOSE-1,6-BISPHOSPHATASE-RELATED"/>
    <property type="match status" value="1"/>
</dbReference>
<dbReference type="PANTHER" id="PTHR11556:SF35">
    <property type="entry name" value="SEDOHEPTULOSE-1,7-BISPHOSPHATASE, CHLOROPLASTIC"/>
    <property type="match status" value="1"/>
</dbReference>
<dbReference type="Pfam" id="PF00316">
    <property type="entry name" value="FBPase"/>
    <property type="match status" value="1"/>
</dbReference>
<dbReference type="Pfam" id="PF18913">
    <property type="entry name" value="FBPase_C"/>
    <property type="match status" value="1"/>
</dbReference>
<dbReference type="PIRSF" id="PIRSF500210">
    <property type="entry name" value="FBPtase"/>
    <property type="match status" value="1"/>
</dbReference>
<dbReference type="PIRSF" id="PIRSF000904">
    <property type="entry name" value="FBPtase_SBPase"/>
    <property type="match status" value="1"/>
</dbReference>
<dbReference type="PRINTS" id="PR01958">
    <property type="entry name" value="S17BPHPHTASE"/>
</dbReference>
<dbReference type="SUPFAM" id="SSF56655">
    <property type="entry name" value="Carbohydrate phosphatase"/>
    <property type="match status" value="1"/>
</dbReference>
<dbReference type="PROSITE" id="PS00124">
    <property type="entry name" value="FBPASE"/>
    <property type="match status" value="1"/>
</dbReference>
<gene>
    <name evidence="1" type="primary">fbp</name>
    <name type="ordered locus">Pcar_1027</name>
</gene>
<evidence type="ECO:0000255" key="1">
    <source>
        <dbReference type="HAMAP-Rule" id="MF_01855"/>
    </source>
</evidence>
<reference key="1">
    <citation type="submission" date="2005-10" db="EMBL/GenBank/DDBJ databases">
        <title>Complete sequence of Pelobacter carbinolicus DSM 2380.</title>
        <authorList>
            <person name="Copeland A."/>
            <person name="Lucas S."/>
            <person name="Lapidus A."/>
            <person name="Barry K."/>
            <person name="Detter J.C."/>
            <person name="Glavina T."/>
            <person name="Hammon N."/>
            <person name="Israni S."/>
            <person name="Pitluck S."/>
            <person name="Chertkov O."/>
            <person name="Schmutz J."/>
            <person name="Larimer F."/>
            <person name="Land M."/>
            <person name="Kyrpides N."/>
            <person name="Ivanova N."/>
            <person name="Richardson P."/>
        </authorList>
    </citation>
    <scope>NUCLEOTIDE SEQUENCE [LARGE SCALE GENOMIC DNA]</scope>
    <source>
        <strain>DSM 2380 / NBRC 103641 / GraBd1</strain>
    </source>
</reference>
<keyword id="KW-0119">Carbohydrate metabolism</keyword>
<keyword id="KW-0963">Cytoplasm</keyword>
<keyword id="KW-0378">Hydrolase</keyword>
<keyword id="KW-0460">Magnesium</keyword>
<keyword id="KW-0479">Metal-binding</keyword>
<keyword id="KW-1185">Reference proteome</keyword>
<name>F16PA_SYNC1</name>
<accession>Q3A5T0</accession>
<protein>
    <recommendedName>
        <fullName evidence="1">Fructose-1,6-bisphosphatase class 1</fullName>
        <shortName evidence="1">FBPase class 1</shortName>
        <ecNumber evidence="1">3.1.3.11</ecNumber>
    </recommendedName>
    <alternativeName>
        <fullName evidence="1">D-fructose-1,6-bisphosphate 1-phosphohydrolase class 1</fullName>
    </alternativeName>
</protein>
<organism>
    <name type="scientific">Syntrophotalea carbinolica (strain DSM 2380 / NBRC 103641 / GraBd1)</name>
    <name type="common">Pelobacter carbinolicus</name>
    <dbReference type="NCBI Taxonomy" id="338963"/>
    <lineage>
        <taxon>Bacteria</taxon>
        <taxon>Pseudomonadati</taxon>
        <taxon>Thermodesulfobacteriota</taxon>
        <taxon>Desulfuromonadia</taxon>
        <taxon>Desulfuromonadales</taxon>
        <taxon>Syntrophotaleaceae</taxon>
        <taxon>Syntrophotalea</taxon>
    </lineage>
</organism>
<sequence>MEASVGQAGKTKFQIDLRRYLREDGEDEGLIHLICEIAEASKYIVNSIRTGDLGVAGTSNLYGEEQLALDVLSDRILRKRLAKSGVVSNIVSEETNDIVFVAPHRTGNYSVSYDPLDGSSLVDVNLAVGTIVSIYKGSDLMQPGNKQAAALYILYGPRTTLVYTTGNGVHEFGMNQLMEYTLLRRNIRMESKASIYAPGGLRSLYTDGTDKFVRQLETNGVKLRYSGGLVPDINQMLMKGKGIFFYPHLQNAPQGKLRLLFELNPMAFLMEQAGGAASNGHQRILDLVPQQFDERSPFFCGCREDVELAETLIREEKQIR</sequence>
<feature type="chain" id="PRO_0000364622" description="Fructose-1,6-bisphosphatase class 1">
    <location>
        <begin position="1"/>
        <end position="320"/>
    </location>
</feature>
<feature type="binding site" evidence="1">
    <location>
        <position position="93"/>
    </location>
    <ligand>
        <name>Mg(2+)</name>
        <dbReference type="ChEBI" id="CHEBI:18420"/>
        <label>1</label>
    </ligand>
</feature>
<feature type="binding site" evidence="1">
    <location>
        <position position="114"/>
    </location>
    <ligand>
        <name>Mg(2+)</name>
        <dbReference type="ChEBI" id="CHEBI:18420"/>
        <label>1</label>
    </ligand>
</feature>
<feature type="binding site" evidence="1">
    <location>
        <position position="114"/>
    </location>
    <ligand>
        <name>Mg(2+)</name>
        <dbReference type="ChEBI" id="CHEBI:18420"/>
        <label>2</label>
    </ligand>
</feature>
<feature type="binding site" evidence="1">
    <location>
        <position position="116"/>
    </location>
    <ligand>
        <name>Mg(2+)</name>
        <dbReference type="ChEBI" id="CHEBI:18420"/>
        <label>1</label>
    </ligand>
</feature>
<feature type="binding site" evidence="1">
    <location>
        <begin position="117"/>
        <end position="120"/>
    </location>
    <ligand>
        <name>substrate</name>
    </ligand>
</feature>
<feature type="binding site" evidence="1">
    <location>
        <position position="117"/>
    </location>
    <ligand>
        <name>Mg(2+)</name>
        <dbReference type="ChEBI" id="CHEBI:18420"/>
        <label>2</label>
    </ligand>
</feature>
<feature type="binding site" evidence="1">
    <location>
        <position position="225"/>
    </location>
    <ligand>
        <name>substrate</name>
    </ligand>
</feature>
<feature type="binding site" evidence="1">
    <location>
        <position position="256"/>
    </location>
    <ligand>
        <name>substrate</name>
    </ligand>
</feature>
<feature type="binding site" evidence="1">
    <location>
        <position position="262"/>
    </location>
    <ligand>
        <name>Mg(2+)</name>
        <dbReference type="ChEBI" id="CHEBI:18420"/>
        <label>2</label>
    </ligand>
</feature>